<gene>
    <name evidence="5" type="primary">DYS1</name>
    <name type="ordered locus">YHR068W</name>
</gene>
<sequence>MSDINEKLPELLQDAVLKASVPIPDDFVKVQGIDYSKPEATNMRATDLIEAMKTMGFQASSVGTACEIIDSMRSWRGKHIDELDDHEKKGCFDEEGYQKTTIFMGYTSNLISSGVRETLRYLVQHKMVDAVVTSAGGVEEDLIKCLAPTYLGEFALKGKSLRDQGMNRIGNLLVPNDNYCKFEEWIVPILDKMLEEQDEYVKKHGADCLEANQDVDSPIWTPSKMIDRFGKEINDESSVLYWAHKNKIPIFCPSLTDGSIGDMLFFHTFKASPKQLRVDIVGDIRKINSMSMAAYRAGMIILGGGLIKHHIANACLMRNGADYAVYINTGQEYDGSDAGARPDEAVSWGKIKAEAKSVKLFADVTTVLPLIVAATFASGKPIKKVKN</sequence>
<dbReference type="EC" id="2.5.1.46" evidence="3"/>
<dbReference type="EMBL" id="D78185">
    <property type="protein sequence ID" value="BAA11253.1"/>
    <property type="molecule type" value="Genomic_DNA"/>
</dbReference>
<dbReference type="EMBL" id="U00061">
    <property type="protein sequence ID" value="AAB68377.1"/>
    <property type="molecule type" value="Genomic_DNA"/>
</dbReference>
<dbReference type="EMBL" id="AY558282">
    <property type="protein sequence ID" value="AAS56608.1"/>
    <property type="molecule type" value="Genomic_DNA"/>
</dbReference>
<dbReference type="EMBL" id="BK006934">
    <property type="protein sequence ID" value="DAA06761.1"/>
    <property type="molecule type" value="Genomic_DNA"/>
</dbReference>
<dbReference type="PIR" id="S46698">
    <property type="entry name" value="S46698"/>
</dbReference>
<dbReference type="RefSeq" id="NP_011935.1">
    <property type="nucleotide sequence ID" value="NM_001179198.1"/>
</dbReference>
<dbReference type="SMR" id="P38791"/>
<dbReference type="BioGRID" id="36500">
    <property type="interactions" value="122"/>
</dbReference>
<dbReference type="DIP" id="DIP-2788N"/>
<dbReference type="FunCoup" id="P38791">
    <property type="interactions" value="807"/>
</dbReference>
<dbReference type="IntAct" id="P38791">
    <property type="interactions" value="7"/>
</dbReference>
<dbReference type="MINT" id="P38791"/>
<dbReference type="STRING" id="4932.YHR068W"/>
<dbReference type="iPTMnet" id="P38791"/>
<dbReference type="PaxDb" id="4932-YHR068W"/>
<dbReference type="PeptideAtlas" id="P38791"/>
<dbReference type="EnsemblFungi" id="YHR068W_mRNA">
    <property type="protein sequence ID" value="YHR068W"/>
    <property type="gene ID" value="YHR068W"/>
</dbReference>
<dbReference type="GeneID" id="856465"/>
<dbReference type="KEGG" id="sce:YHR068W"/>
<dbReference type="AGR" id="SGD:S000001110"/>
<dbReference type="SGD" id="S000001110">
    <property type="gene designation" value="DYS1"/>
</dbReference>
<dbReference type="VEuPathDB" id="FungiDB:YHR068W"/>
<dbReference type="eggNOG" id="KOG2924">
    <property type="taxonomic scope" value="Eukaryota"/>
</dbReference>
<dbReference type="GeneTree" id="ENSGT00390000008063"/>
<dbReference type="HOGENOM" id="CLU_039781_0_0_1"/>
<dbReference type="InParanoid" id="P38791"/>
<dbReference type="OMA" id="HSIINAN"/>
<dbReference type="OrthoDB" id="294378at2759"/>
<dbReference type="BioCyc" id="YEAST:YHR068W-MONOMER"/>
<dbReference type="Reactome" id="R-SCE-204626">
    <property type="pathway name" value="Hypusine synthesis from eIF5A-lysine"/>
</dbReference>
<dbReference type="UniPathway" id="UPA00354"/>
<dbReference type="BioGRID-ORCS" id="856465">
    <property type="hits" value="3 hits in 10 CRISPR screens"/>
</dbReference>
<dbReference type="PRO" id="PR:P38791"/>
<dbReference type="Proteomes" id="UP000002311">
    <property type="component" value="Chromosome VIII"/>
</dbReference>
<dbReference type="RNAct" id="P38791">
    <property type="molecule type" value="protein"/>
</dbReference>
<dbReference type="GO" id="GO:0005737">
    <property type="term" value="C:cytoplasm"/>
    <property type="evidence" value="ECO:0007005"/>
    <property type="project" value="SGD"/>
</dbReference>
<dbReference type="GO" id="GO:0034038">
    <property type="term" value="F:deoxyhypusine synthase activity"/>
    <property type="evidence" value="ECO:0000314"/>
    <property type="project" value="SGD"/>
</dbReference>
<dbReference type="GO" id="GO:0008216">
    <property type="term" value="P:spermidine metabolic process"/>
    <property type="evidence" value="ECO:0000318"/>
    <property type="project" value="GO_Central"/>
</dbReference>
<dbReference type="FunFam" id="3.40.910.10:FF:000003">
    <property type="entry name" value="Deoxyhypusine synthase"/>
    <property type="match status" value="1"/>
</dbReference>
<dbReference type="Gene3D" id="3.40.910.10">
    <property type="entry name" value="Deoxyhypusine synthase"/>
    <property type="match status" value="1"/>
</dbReference>
<dbReference type="InterPro" id="IPR002773">
    <property type="entry name" value="Deoxyhypusine_synthase"/>
</dbReference>
<dbReference type="InterPro" id="IPR036982">
    <property type="entry name" value="Deoxyhypusine_synthase_sf"/>
</dbReference>
<dbReference type="InterPro" id="IPR029035">
    <property type="entry name" value="DHS-like_NAD/FAD-binding_dom"/>
</dbReference>
<dbReference type="NCBIfam" id="TIGR00321">
    <property type="entry name" value="dhys"/>
    <property type="match status" value="1"/>
</dbReference>
<dbReference type="PANTHER" id="PTHR11703">
    <property type="entry name" value="DEOXYHYPUSINE SYNTHASE"/>
    <property type="match status" value="1"/>
</dbReference>
<dbReference type="PANTHER" id="PTHR11703:SF0">
    <property type="entry name" value="DEOXYHYPUSINE SYNTHASE"/>
    <property type="match status" value="1"/>
</dbReference>
<dbReference type="Pfam" id="PF01916">
    <property type="entry name" value="DS"/>
    <property type="match status" value="1"/>
</dbReference>
<dbReference type="SUPFAM" id="SSF52467">
    <property type="entry name" value="DHS-like NAD/FAD-binding domain"/>
    <property type="match status" value="1"/>
</dbReference>
<protein>
    <recommendedName>
        <fullName evidence="5">Deoxyhypusine synthase</fullName>
        <shortName evidence="5">DHS</shortName>
        <ecNumber evidence="3">2.5.1.46</ecNumber>
    </recommendedName>
</protein>
<name>DHYS_YEAST</name>
<comment type="function">
    <text evidence="3 4">Catalyzes the NAD-dependent oxidative cleavage of spermidine and the subsequent transfer of the butylamine moiety of spermidine to the epsilon-amino group of a specific lysine residue of the eIF-5A precursor protein to form the intermediate deoxyhypusine residue.</text>
</comment>
<comment type="catalytic activity">
    <reaction evidence="3">
        <text>[eIF5A protein]-L-lysine + spermidine = [eIF5A protein]-deoxyhypusine + propane-1,3-diamine</text>
        <dbReference type="Rhea" id="RHEA:33299"/>
        <dbReference type="Rhea" id="RHEA-COMP:10143"/>
        <dbReference type="Rhea" id="RHEA-COMP:10144"/>
        <dbReference type="ChEBI" id="CHEBI:29969"/>
        <dbReference type="ChEBI" id="CHEBI:57484"/>
        <dbReference type="ChEBI" id="CHEBI:57834"/>
        <dbReference type="ChEBI" id="CHEBI:82657"/>
        <dbReference type="EC" id="2.5.1.46"/>
    </reaction>
</comment>
<comment type="cofactor">
    <cofactor>
        <name>NAD(+)</name>
        <dbReference type="ChEBI" id="CHEBI:57540"/>
    </cofactor>
</comment>
<comment type="pathway">
    <text evidence="3">Protein modification; eIF5A hypusination.</text>
</comment>
<comment type="subunit">
    <text evidence="3">Homotetramer.</text>
</comment>
<comment type="interaction">
    <interactant intactId="EBI-5871">
        <id>P38791</id>
    </interactant>
    <interactant intactId="EBI-9033">
        <id>P23301</id>
        <label>HYP2</label>
    </interactant>
    <organismsDiffer>false</organismsDiffer>
    <experiments>5</experiments>
</comment>
<comment type="miscellaneous">
    <text evidence="2">Present with 7600 molecules/cell in log phase SD medium.</text>
</comment>
<comment type="similarity">
    <text evidence="6">Belongs to the deoxyhypusine synthase family.</text>
</comment>
<keyword id="KW-0386">Hypusine biosynthesis</keyword>
<keyword id="KW-0520">NAD</keyword>
<keyword id="KW-1185">Reference proteome</keyword>
<keyword id="KW-0808">Transferase</keyword>
<reference key="1">
    <citation type="journal article" date="1996" name="FEBS Lett.">
        <title>Deoxyhypusine synthase gene is essential for cell viability in the yeast Saccharomyces cerevisiae.</title>
        <authorList>
            <person name="Sasaki K."/>
            <person name="Abid M.R."/>
            <person name="Miyazaki M."/>
        </authorList>
    </citation>
    <scope>NUCLEOTIDE SEQUENCE [GENOMIC DNA]</scope>
    <scope>FUNCTION</scope>
    <source>
        <strain>131</strain>
    </source>
</reference>
<reference key="2">
    <citation type="journal article" date="1994" name="Science">
        <title>Complete nucleotide sequence of Saccharomyces cerevisiae chromosome VIII.</title>
        <authorList>
            <person name="Johnston M."/>
            <person name="Andrews S."/>
            <person name="Brinkman R."/>
            <person name="Cooper J."/>
            <person name="Ding H."/>
            <person name="Dover J."/>
            <person name="Du Z."/>
            <person name="Favello A."/>
            <person name="Fulton L."/>
            <person name="Gattung S."/>
            <person name="Geisel C."/>
            <person name="Kirsten J."/>
            <person name="Kucaba T."/>
            <person name="Hillier L.W."/>
            <person name="Jier M."/>
            <person name="Johnston L."/>
            <person name="Langston Y."/>
            <person name="Latreille P."/>
            <person name="Louis E.J."/>
            <person name="Macri C."/>
            <person name="Mardis E."/>
            <person name="Menezes S."/>
            <person name="Mouser L."/>
            <person name="Nhan M."/>
            <person name="Rifkin L."/>
            <person name="Riles L."/>
            <person name="St Peter H."/>
            <person name="Trevaskis E."/>
            <person name="Vaughan K."/>
            <person name="Vignati D."/>
            <person name="Wilcox L."/>
            <person name="Wohldman P."/>
            <person name="Waterston R."/>
            <person name="Wilson R."/>
            <person name="Vaudin M."/>
        </authorList>
    </citation>
    <scope>NUCLEOTIDE SEQUENCE [LARGE SCALE GENOMIC DNA]</scope>
    <source>
        <strain>ATCC 204508 / S288c</strain>
    </source>
</reference>
<reference key="3">
    <citation type="journal article" date="2014" name="G3 (Bethesda)">
        <title>The reference genome sequence of Saccharomyces cerevisiae: Then and now.</title>
        <authorList>
            <person name="Engel S.R."/>
            <person name="Dietrich F.S."/>
            <person name="Fisk D.G."/>
            <person name="Binkley G."/>
            <person name="Balakrishnan R."/>
            <person name="Costanzo M.C."/>
            <person name="Dwight S.S."/>
            <person name="Hitz B.C."/>
            <person name="Karra K."/>
            <person name="Nash R.S."/>
            <person name="Weng S."/>
            <person name="Wong E.D."/>
            <person name="Lloyd P."/>
            <person name="Skrzypek M.S."/>
            <person name="Miyasato S.R."/>
            <person name="Simison M."/>
            <person name="Cherry J.M."/>
        </authorList>
    </citation>
    <scope>GENOME REANNOTATION</scope>
    <source>
        <strain>ATCC 204508 / S288c</strain>
    </source>
</reference>
<reference key="4">
    <citation type="journal article" date="2007" name="Genome Res.">
        <title>Approaching a complete repository of sequence-verified protein-encoding clones for Saccharomyces cerevisiae.</title>
        <authorList>
            <person name="Hu Y."/>
            <person name="Rolfs A."/>
            <person name="Bhullar B."/>
            <person name="Murthy T.V.S."/>
            <person name="Zhu C."/>
            <person name="Berger M.F."/>
            <person name="Camargo A.A."/>
            <person name="Kelley F."/>
            <person name="McCarron S."/>
            <person name="Jepson D."/>
            <person name="Richardson A."/>
            <person name="Raphael J."/>
            <person name="Moreira D."/>
            <person name="Taycher E."/>
            <person name="Zuo D."/>
            <person name="Mohr S."/>
            <person name="Kane M.F."/>
            <person name="Williamson J."/>
            <person name="Simpson A.J.G."/>
            <person name="Bulyk M.L."/>
            <person name="Harlow E."/>
            <person name="Marsischky G."/>
            <person name="Kolodner R.D."/>
            <person name="LaBaer J."/>
        </authorList>
    </citation>
    <scope>NUCLEOTIDE SEQUENCE [GENOMIC DNA]</scope>
    <source>
        <strain>ATCC 204508 / S288c</strain>
    </source>
</reference>
<reference key="5">
    <citation type="journal article" date="1995" name="J. Biol. Chem.">
        <title>Identification of YHR068w in Saccharomyces cerevisiae chromosome VIII as a gene for deoxyhypusine synthase. Expression and characterization of the enzyme.</title>
        <authorList>
            <person name="Kang K.R."/>
            <person name="Wolff E.C."/>
            <person name="Park M.H."/>
            <person name="Folk J.E."/>
            <person name="Chung S.I."/>
        </authorList>
    </citation>
    <scope>IDENTIFICATION</scope>
    <scope>FUNCTION</scope>
    <scope>CATALYTIC ACTIVITY</scope>
    <scope>SUBUNIT</scope>
</reference>
<reference key="6">
    <citation type="journal article" date="2003" name="Nature">
        <title>Global analysis of protein expression in yeast.</title>
        <authorList>
            <person name="Ghaemmaghami S."/>
            <person name="Huh W.-K."/>
            <person name="Bower K."/>
            <person name="Howson R.W."/>
            <person name="Belle A."/>
            <person name="Dephoure N."/>
            <person name="O'Shea E.K."/>
            <person name="Weissman J.S."/>
        </authorList>
    </citation>
    <scope>LEVEL OF PROTEIN EXPRESSION [LARGE SCALE ANALYSIS]</scope>
</reference>
<accession>P38791</accession>
<accession>D3DL17</accession>
<evidence type="ECO:0000250" key="1">
    <source>
        <dbReference type="UniProtKB" id="P49366"/>
    </source>
</evidence>
<evidence type="ECO:0000269" key="2">
    <source>
    </source>
</evidence>
<evidence type="ECO:0000269" key="3">
    <source>
    </source>
</evidence>
<evidence type="ECO:0000269" key="4">
    <source>
    </source>
</evidence>
<evidence type="ECO:0000303" key="5">
    <source>
    </source>
</evidence>
<evidence type="ECO:0000305" key="6"/>
<proteinExistence type="evidence at protein level"/>
<organism>
    <name type="scientific">Saccharomyces cerevisiae (strain ATCC 204508 / S288c)</name>
    <name type="common">Baker's yeast</name>
    <dbReference type="NCBI Taxonomy" id="559292"/>
    <lineage>
        <taxon>Eukaryota</taxon>
        <taxon>Fungi</taxon>
        <taxon>Dikarya</taxon>
        <taxon>Ascomycota</taxon>
        <taxon>Saccharomycotina</taxon>
        <taxon>Saccharomycetes</taxon>
        <taxon>Saccharomycetales</taxon>
        <taxon>Saccharomycetaceae</taxon>
        <taxon>Saccharomyces</taxon>
    </lineage>
</organism>
<feature type="chain" id="PRO_0000134488" description="Deoxyhypusine synthase">
    <location>
        <begin position="1"/>
        <end position="387"/>
    </location>
</feature>
<feature type="active site" description="Nucleophile" evidence="1">
    <location>
        <position position="350"/>
    </location>
</feature>
<feature type="binding site" evidence="1">
    <location>
        <begin position="108"/>
        <end position="112"/>
    </location>
    <ligand>
        <name>NAD(+)</name>
        <dbReference type="ChEBI" id="CHEBI:57540"/>
    </ligand>
</feature>
<feature type="binding site" evidence="1">
    <location>
        <begin position="134"/>
        <end position="136"/>
    </location>
    <ligand>
        <name>NAD(+)</name>
        <dbReference type="ChEBI" id="CHEBI:57540"/>
    </ligand>
</feature>
<feature type="binding site" evidence="1">
    <location>
        <begin position="139"/>
        <end position="140"/>
    </location>
    <ligand>
        <name>spermidine</name>
        <dbReference type="ChEBI" id="CHEBI:57834"/>
    </ligand>
</feature>
<feature type="binding site" evidence="1">
    <location>
        <position position="140"/>
    </location>
    <ligand>
        <name>NAD(+)</name>
        <dbReference type="ChEBI" id="CHEBI:57540"/>
    </ligand>
</feature>
<feature type="binding site" evidence="1">
    <location>
        <position position="257"/>
    </location>
    <ligand>
        <name>NAD(+)</name>
        <dbReference type="ChEBI" id="CHEBI:57540"/>
    </ligand>
</feature>
<feature type="binding site" evidence="1">
    <location>
        <position position="262"/>
    </location>
    <ligand>
        <name>spermidine</name>
        <dbReference type="ChEBI" id="CHEBI:57834"/>
    </ligand>
</feature>
<feature type="binding site" evidence="1">
    <location>
        <position position="304"/>
    </location>
    <ligand>
        <name>NAD(+)</name>
        <dbReference type="ChEBI" id="CHEBI:57540"/>
    </ligand>
</feature>
<feature type="binding site" evidence="1">
    <location>
        <position position="309"/>
    </location>
    <ligand>
        <name>spermidine</name>
        <dbReference type="ChEBI" id="CHEBI:57834"/>
    </ligand>
</feature>
<feature type="binding site" evidence="1">
    <location>
        <begin position="329"/>
        <end position="330"/>
    </location>
    <ligand>
        <name>NAD(+)</name>
        <dbReference type="ChEBI" id="CHEBI:57540"/>
    </ligand>
</feature>
<feature type="binding site" evidence="1">
    <location>
        <begin position="335"/>
        <end position="337"/>
    </location>
    <ligand>
        <name>spermidine</name>
        <dbReference type="ChEBI" id="CHEBI:57834"/>
    </ligand>
</feature>
<feature type="binding site" evidence="1">
    <location>
        <begin position="344"/>
        <end position="350"/>
    </location>
    <ligand>
        <name>spermidine</name>
        <dbReference type="ChEBI" id="CHEBI:57834"/>
    </ligand>
</feature>
<feature type="binding site" evidence="1">
    <location>
        <begin position="363"/>
        <end position="364"/>
    </location>
    <ligand>
        <name>NAD(+)</name>
        <dbReference type="ChEBI" id="CHEBI:57540"/>
    </ligand>
</feature>